<reference key="1">
    <citation type="submission" date="2000-10" db="EMBL/GenBank/DDBJ databases">
        <title>Mineral phosphate solubilization in Sinorhizobium meliloti.</title>
        <authorList>
            <person name="Finan T.M."/>
            <person name="Aneja P."/>
            <person name="Chain P."/>
            <person name="Napper K."/>
            <person name="Golding B."/>
        </authorList>
    </citation>
    <scope>NUCLEOTIDE SEQUENCE [GENOMIC DNA]</scope>
    <source>
        <strain>1021</strain>
    </source>
</reference>
<reference key="2">
    <citation type="journal article" date="2001" name="Proc. Natl. Acad. Sci. U.S.A.">
        <title>The complete sequence of the 1,683-kb pSymB megaplasmid from the N2-fixing endosymbiont Sinorhizobium meliloti.</title>
        <authorList>
            <person name="Finan T.M."/>
            <person name="Weidner S."/>
            <person name="Wong K."/>
            <person name="Buhrmester J."/>
            <person name="Chain P."/>
            <person name="Vorhoelter F.J."/>
            <person name="Hernandez-Lucas I."/>
            <person name="Becker A."/>
            <person name="Cowie A."/>
            <person name="Gouzy J."/>
            <person name="Golding B."/>
            <person name="Puehler A."/>
        </authorList>
    </citation>
    <scope>NUCLEOTIDE SEQUENCE [LARGE SCALE GENOMIC DNA]</scope>
    <source>
        <strain>1021</strain>
    </source>
</reference>
<reference key="3">
    <citation type="journal article" date="2001" name="Science">
        <title>The composite genome of the legume symbiont Sinorhizobium meliloti.</title>
        <authorList>
            <person name="Galibert F."/>
            <person name="Finan T.M."/>
            <person name="Long S.R."/>
            <person name="Puehler A."/>
            <person name="Abola P."/>
            <person name="Ampe F."/>
            <person name="Barloy-Hubler F."/>
            <person name="Barnett M.J."/>
            <person name="Becker A."/>
            <person name="Boistard P."/>
            <person name="Bothe G."/>
            <person name="Boutry M."/>
            <person name="Bowser L."/>
            <person name="Buhrmester J."/>
            <person name="Cadieu E."/>
            <person name="Capela D."/>
            <person name="Chain P."/>
            <person name="Cowie A."/>
            <person name="Davis R.W."/>
            <person name="Dreano S."/>
            <person name="Federspiel N.A."/>
            <person name="Fisher R.F."/>
            <person name="Gloux S."/>
            <person name="Godrie T."/>
            <person name="Goffeau A."/>
            <person name="Golding B."/>
            <person name="Gouzy J."/>
            <person name="Gurjal M."/>
            <person name="Hernandez-Lucas I."/>
            <person name="Hong A."/>
            <person name="Huizar L."/>
            <person name="Hyman R.W."/>
            <person name="Jones T."/>
            <person name="Kahn D."/>
            <person name="Kahn M.L."/>
            <person name="Kalman S."/>
            <person name="Keating D.H."/>
            <person name="Kiss E."/>
            <person name="Komp C."/>
            <person name="Lelaure V."/>
            <person name="Masuy D."/>
            <person name="Palm C."/>
            <person name="Peck M.C."/>
            <person name="Pohl T.M."/>
            <person name="Portetelle D."/>
            <person name="Purnelle B."/>
            <person name="Ramsperger U."/>
            <person name="Surzycki R."/>
            <person name="Thebault P."/>
            <person name="Vandenbol M."/>
            <person name="Vorhoelter F.J."/>
            <person name="Weidner S."/>
            <person name="Wells D.H."/>
            <person name="Wong K."/>
            <person name="Yeh K.-C."/>
            <person name="Batut J."/>
        </authorList>
    </citation>
    <scope>NUCLEOTIDE SEQUENCE [LARGE SCALE GENOMIC DNA]</scope>
    <source>
        <strain>1021</strain>
    </source>
</reference>
<organism>
    <name type="scientific">Rhizobium meliloti (strain 1021)</name>
    <name type="common">Ensifer meliloti</name>
    <name type="synonym">Sinorhizobium meliloti</name>
    <dbReference type="NCBI Taxonomy" id="266834"/>
    <lineage>
        <taxon>Bacteria</taxon>
        <taxon>Pseudomonadati</taxon>
        <taxon>Pseudomonadota</taxon>
        <taxon>Alphaproteobacteria</taxon>
        <taxon>Hyphomicrobiales</taxon>
        <taxon>Rhizobiaceae</taxon>
        <taxon>Sinorhizobium/Ensifer group</taxon>
        <taxon>Sinorhizobium</taxon>
    </lineage>
</organism>
<evidence type="ECO:0000255" key="1">
    <source>
        <dbReference type="HAMAP-Rule" id="MF_00654"/>
    </source>
</evidence>
<comment type="function">
    <text evidence="1">Ring cyclization and eight-electron oxidation of 3a-(2-amino-2-carboxyethyl)-4,5-dioxo-4,5,6,7,8,9-hexahydroquinoline-7,9-dicarboxylic-acid to PQQ.</text>
</comment>
<comment type="catalytic activity">
    <reaction evidence="1">
        <text>6-(2-amino-2-carboxyethyl)-7,8-dioxo-1,2,3,4,7,8-hexahydroquinoline-2,4-dicarboxylate + 3 O2 = pyrroloquinoline quinone + 2 H2O2 + 2 H2O + H(+)</text>
        <dbReference type="Rhea" id="RHEA:10692"/>
        <dbReference type="ChEBI" id="CHEBI:15377"/>
        <dbReference type="ChEBI" id="CHEBI:15378"/>
        <dbReference type="ChEBI" id="CHEBI:15379"/>
        <dbReference type="ChEBI" id="CHEBI:16240"/>
        <dbReference type="ChEBI" id="CHEBI:58442"/>
        <dbReference type="ChEBI" id="CHEBI:58778"/>
        <dbReference type="EC" id="1.3.3.11"/>
    </reaction>
</comment>
<comment type="pathway">
    <text evidence="1">Cofactor biosynthesis; pyrroloquinoline quinone biosynthesis.</text>
</comment>
<comment type="similarity">
    <text evidence="1">Belongs to the PqqC family.</text>
</comment>
<proteinExistence type="inferred from homology"/>
<geneLocation type="plasmid">
    <name>pSymB</name>
    <name>megaplasmid 2</name>
</geneLocation>
<keyword id="KW-0560">Oxidoreductase</keyword>
<keyword id="KW-0614">Plasmid</keyword>
<keyword id="KW-0884">PQQ biosynthesis</keyword>
<keyword id="KW-1185">Reference proteome</keyword>
<gene>
    <name evidence="1" type="primary">pqqC</name>
    <name type="ordered locus">RB0199</name>
    <name type="ORF">SMb20206</name>
</gene>
<accession>Q9EXV0</accession>
<feature type="chain" id="PRO_0000219986" description="Pyrroloquinoline-quinone synthase">
    <location>
        <begin position="1"/>
        <end position="256"/>
    </location>
</feature>
<sequence>MTTATDRQAFHARLLEIGKERYHDKHPFHAMLHGGGCTTTQVRAWVINRYYYQSRIPMKDAAFLSRCDDPDMRRAWRSRIEDHDGGVEEGGGIRRWLRLAEAVGLDPAYVGSARGVLPSTRFAVDAYVSFVREKPLLEAVASSLTELFAPKIHSERIAGLLEHYAFADDAALAYFRQRLAEVPRDVEFGLAYVLDHADTREKQDAAAQALTFKTDVLWAQLDALYSAYVTPGRIPPGAWDGREGVIREPRAREAAE</sequence>
<dbReference type="EC" id="1.3.3.11" evidence="1"/>
<dbReference type="EMBL" id="AL591985">
    <property type="protein sequence ID" value="CAC48599.1"/>
    <property type="molecule type" value="Genomic_DNA"/>
</dbReference>
<dbReference type="PIR" id="G95866">
    <property type="entry name" value="G95866"/>
</dbReference>
<dbReference type="RefSeq" id="NP_436739.1">
    <property type="nucleotide sequence ID" value="NC_003078.1"/>
</dbReference>
<dbReference type="RefSeq" id="WP_010975104.1">
    <property type="nucleotide sequence ID" value="NC_003078.1"/>
</dbReference>
<dbReference type="SMR" id="Q9EXV0"/>
<dbReference type="EnsemblBacteria" id="CAC48599">
    <property type="protein sequence ID" value="CAC48599"/>
    <property type="gene ID" value="SM_b20206"/>
</dbReference>
<dbReference type="KEGG" id="sme:SM_b20206"/>
<dbReference type="PATRIC" id="fig|266834.11.peg.5115"/>
<dbReference type="eggNOG" id="COG5424">
    <property type="taxonomic scope" value="Bacteria"/>
</dbReference>
<dbReference type="HOGENOM" id="CLU_080136_0_0_5"/>
<dbReference type="OrthoDB" id="9800756at2"/>
<dbReference type="UniPathway" id="UPA00539"/>
<dbReference type="Proteomes" id="UP000001976">
    <property type="component" value="Plasmid pSymB"/>
</dbReference>
<dbReference type="GO" id="GO:0033732">
    <property type="term" value="F:pyrroloquinoline-quinone synthase activity"/>
    <property type="evidence" value="ECO:0007669"/>
    <property type="project" value="UniProtKB-EC"/>
</dbReference>
<dbReference type="GO" id="GO:0018189">
    <property type="term" value="P:pyrroloquinoline quinone biosynthetic process"/>
    <property type="evidence" value="ECO:0007669"/>
    <property type="project" value="UniProtKB-UniRule"/>
</dbReference>
<dbReference type="GO" id="GO:0006790">
    <property type="term" value="P:sulfur compound metabolic process"/>
    <property type="evidence" value="ECO:0007669"/>
    <property type="project" value="UniProtKB-ARBA"/>
</dbReference>
<dbReference type="Gene3D" id="1.20.910.10">
    <property type="entry name" value="Heme oxygenase-like"/>
    <property type="match status" value="1"/>
</dbReference>
<dbReference type="HAMAP" id="MF_00654">
    <property type="entry name" value="PQQ_syn_PqqC"/>
    <property type="match status" value="1"/>
</dbReference>
<dbReference type="InterPro" id="IPR016084">
    <property type="entry name" value="Haem_Oase-like_multi-hlx"/>
</dbReference>
<dbReference type="InterPro" id="IPR011845">
    <property type="entry name" value="PqqC"/>
</dbReference>
<dbReference type="InterPro" id="IPR039068">
    <property type="entry name" value="PqqC-like"/>
</dbReference>
<dbReference type="InterPro" id="IPR004305">
    <property type="entry name" value="Thiaminase-2/PQQC"/>
</dbReference>
<dbReference type="NCBIfam" id="TIGR02111">
    <property type="entry name" value="PQQ_syn_pqqC"/>
    <property type="match status" value="1"/>
</dbReference>
<dbReference type="PANTHER" id="PTHR40279:SF3">
    <property type="entry name" value="4-AMINOBENZOATE SYNTHASE"/>
    <property type="match status" value="1"/>
</dbReference>
<dbReference type="PANTHER" id="PTHR40279">
    <property type="entry name" value="PQQC-LIKE PROTEIN"/>
    <property type="match status" value="1"/>
</dbReference>
<dbReference type="Pfam" id="PF03070">
    <property type="entry name" value="TENA_THI-4"/>
    <property type="match status" value="1"/>
</dbReference>
<dbReference type="SUPFAM" id="SSF48613">
    <property type="entry name" value="Heme oxygenase-like"/>
    <property type="match status" value="1"/>
</dbReference>
<protein>
    <recommendedName>
        <fullName evidence="1">Pyrroloquinoline-quinone synthase</fullName>
        <ecNumber evidence="1">1.3.3.11</ecNumber>
    </recommendedName>
    <alternativeName>
        <fullName evidence="1">Coenzyme PQQ synthesis protein C</fullName>
    </alternativeName>
    <alternativeName>
        <fullName evidence="1">Pyrroloquinoline quinone biosynthesis protein C</fullName>
    </alternativeName>
</protein>
<name>PQQC_RHIME</name>